<sequence length="502" mass="54711">MAINAQEISALIKKQIENFQPNFDVTETGIVTYIGDGIARARGLDNAMSGELLEFENGAYGMAQNLESNDVGIIILGDFSAIREGDVVKRTGKIMEVPVGEALIGRVVNPLGQPVDGLGDIETTGFRPVETPAPGVMQRKSVSEPLQTGLKAIDALVPIGRGQRELIIGDRQTGKTSVAIDAILNQKGQDMICIYVAIGQKESTVRTQVETLRRYGALDYTIVVTASASQPSPLLFIAPYAGVAMAEEFMYQGKHVLIVYDDLSKQAVAYRELSLLLRRPPGREAYPGDVFYLHSRLLERSAKVSDDLGGGSITALPFIETQAGDISAYIATNVISITDGQIFLQENLFNSGIRPAIDAGSSVSRVGGSAQIKAMKKVAGTLRLDLASYRELEAFTQFGSDLDAATQAKLNRGRRTVEILKQPLHKPLPVEKQVVILYALTHGFLDDVPVDDILAFEEALYDYFDVHYNDLFETIRTTKDLPEEAALDAAIKAFKEYSNFKS</sequence>
<proteinExistence type="inferred from homology"/>
<feature type="chain" id="PRO_0000238367" description="ATP synthase subunit alpha">
    <location>
        <begin position="1"/>
        <end position="502"/>
    </location>
</feature>
<feature type="binding site" evidence="1">
    <location>
        <begin position="169"/>
        <end position="176"/>
    </location>
    <ligand>
        <name>ATP</name>
        <dbReference type="ChEBI" id="CHEBI:30616"/>
    </ligand>
</feature>
<feature type="site" description="Required for activity" evidence="1">
    <location>
        <position position="362"/>
    </location>
</feature>
<keyword id="KW-0066">ATP synthesis</keyword>
<keyword id="KW-0067">ATP-binding</keyword>
<keyword id="KW-1003">Cell membrane</keyword>
<keyword id="KW-0139">CF(1)</keyword>
<keyword id="KW-0375">Hydrogen ion transport</keyword>
<keyword id="KW-0406">Ion transport</keyword>
<keyword id="KW-0472">Membrane</keyword>
<keyword id="KW-0547">Nucleotide-binding</keyword>
<keyword id="KW-1278">Translocase</keyword>
<keyword id="KW-0813">Transport</keyword>
<name>ATPA_STRP8</name>
<evidence type="ECO:0000255" key="1">
    <source>
        <dbReference type="HAMAP-Rule" id="MF_01346"/>
    </source>
</evidence>
<protein>
    <recommendedName>
        <fullName evidence="1">ATP synthase subunit alpha</fullName>
        <ecNumber evidence="1">7.1.2.2</ecNumber>
    </recommendedName>
    <alternativeName>
        <fullName evidence="1">ATP synthase F1 sector subunit alpha</fullName>
    </alternativeName>
    <alternativeName>
        <fullName evidence="1">F-ATPase subunit alpha</fullName>
    </alternativeName>
</protein>
<reference key="1">
    <citation type="journal article" date="2002" name="Proc. Natl. Acad. Sci. U.S.A.">
        <title>Genome sequence and comparative microarray analysis of serotype M18 group A Streptococcus strains associated with acute rheumatic fever outbreaks.</title>
        <authorList>
            <person name="Smoot J.C."/>
            <person name="Barbian K.D."/>
            <person name="Van Gompel J.J."/>
            <person name="Smoot L.M."/>
            <person name="Chaussee M.S."/>
            <person name="Sylva G.L."/>
            <person name="Sturdevant D.E."/>
            <person name="Ricklefs S.M."/>
            <person name="Porcella S.F."/>
            <person name="Parkins L.D."/>
            <person name="Beres S.B."/>
            <person name="Campbell D.S."/>
            <person name="Smith T.M."/>
            <person name="Zhang Q."/>
            <person name="Kapur V."/>
            <person name="Daly J.A."/>
            <person name="Veasy L.G."/>
            <person name="Musser J.M."/>
        </authorList>
    </citation>
    <scope>NUCLEOTIDE SEQUENCE [LARGE SCALE GENOMIC DNA]</scope>
    <source>
        <strain>MGAS8232</strain>
    </source>
</reference>
<dbReference type="EC" id="7.1.2.2" evidence="1"/>
<dbReference type="EMBL" id="AE009949">
    <property type="protein sequence ID" value="AAL97480.1"/>
    <property type="molecule type" value="Genomic_DNA"/>
</dbReference>
<dbReference type="RefSeq" id="WP_011017610.1">
    <property type="nucleotide sequence ID" value="NC_003485.1"/>
</dbReference>
<dbReference type="SMR" id="Q8P1K6"/>
<dbReference type="KEGG" id="spm:spyM18_0816"/>
<dbReference type="HOGENOM" id="CLU_010091_2_1_9"/>
<dbReference type="GO" id="GO:0005886">
    <property type="term" value="C:plasma membrane"/>
    <property type="evidence" value="ECO:0007669"/>
    <property type="project" value="UniProtKB-SubCell"/>
</dbReference>
<dbReference type="GO" id="GO:0045259">
    <property type="term" value="C:proton-transporting ATP synthase complex"/>
    <property type="evidence" value="ECO:0007669"/>
    <property type="project" value="UniProtKB-KW"/>
</dbReference>
<dbReference type="GO" id="GO:0043531">
    <property type="term" value="F:ADP binding"/>
    <property type="evidence" value="ECO:0007669"/>
    <property type="project" value="TreeGrafter"/>
</dbReference>
<dbReference type="GO" id="GO:0005524">
    <property type="term" value="F:ATP binding"/>
    <property type="evidence" value="ECO:0007669"/>
    <property type="project" value="UniProtKB-UniRule"/>
</dbReference>
<dbReference type="GO" id="GO:0046933">
    <property type="term" value="F:proton-transporting ATP synthase activity, rotational mechanism"/>
    <property type="evidence" value="ECO:0007669"/>
    <property type="project" value="UniProtKB-UniRule"/>
</dbReference>
<dbReference type="CDD" id="cd18113">
    <property type="entry name" value="ATP-synt_F1_alpha_C"/>
    <property type="match status" value="1"/>
</dbReference>
<dbReference type="CDD" id="cd18116">
    <property type="entry name" value="ATP-synt_F1_alpha_N"/>
    <property type="match status" value="1"/>
</dbReference>
<dbReference type="CDD" id="cd01132">
    <property type="entry name" value="F1-ATPase_alpha_CD"/>
    <property type="match status" value="1"/>
</dbReference>
<dbReference type="FunFam" id="1.20.150.20:FF:000001">
    <property type="entry name" value="ATP synthase subunit alpha"/>
    <property type="match status" value="1"/>
</dbReference>
<dbReference type="FunFam" id="2.40.30.20:FF:000001">
    <property type="entry name" value="ATP synthase subunit alpha"/>
    <property type="match status" value="1"/>
</dbReference>
<dbReference type="FunFam" id="3.40.50.300:FF:000002">
    <property type="entry name" value="ATP synthase subunit alpha"/>
    <property type="match status" value="1"/>
</dbReference>
<dbReference type="Gene3D" id="2.40.30.20">
    <property type="match status" value="1"/>
</dbReference>
<dbReference type="Gene3D" id="1.20.150.20">
    <property type="entry name" value="ATP synthase alpha/beta chain, C-terminal domain"/>
    <property type="match status" value="1"/>
</dbReference>
<dbReference type="Gene3D" id="3.40.50.300">
    <property type="entry name" value="P-loop containing nucleotide triphosphate hydrolases"/>
    <property type="match status" value="1"/>
</dbReference>
<dbReference type="HAMAP" id="MF_01346">
    <property type="entry name" value="ATP_synth_alpha_bact"/>
    <property type="match status" value="1"/>
</dbReference>
<dbReference type="InterPro" id="IPR023366">
    <property type="entry name" value="ATP_synth_asu-like_sf"/>
</dbReference>
<dbReference type="InterPro" id="IPR000793">
    <property type="entry name" value="ATP_synth_asu_C"/>
</dbReference>
<dbReference type="InterPro" id="IPR038376">
    <property type="entry name" value="ATP_synth_asu_C_sf"/>
</dbReference>
<dbReference type="InterPro" id="IPR033732">
    <property type="entry name" value="ATP_synth_F1_a_nt-bd_dom"/>
</dbReference>
<dbReference type="InterPro" id="IPR005294">
    <property type="entry name" value="ATP_synth_F1_asu"/>
</dbReference>
<dbReference type="InterPro" id="IPR004100">
    <property type="entry name" value="ATPase_F1/V1/A1_a/bsu_N"/>
</dbReference>
<dbReference type="InterPro" id="IPR036121">
    <property type="entry name" value="ATPase_F1/V1/A1_a/bsu_N_sf"/>
</dbReference>
<dbReference type="InterPro" id="IPR000194">
    <property type="entry name" value="ATPase_F1/V1/A1_a/bsu_nucl-bd"/>
</dbReference>
<dbReference type="InterPro" id="IPR027417">
    <property type="entry name" value="P-loop_NTPase"/>
</dbReference>
<dbReference type="NCBIfam" id="TIGR00962">
    <property type="entry name" value="atpA"/>
    <property type="match status" value="1"/>
</dbReference>
<dbReference type="NCBIfam" id="NF009884">
    <property type="entry name" value="PRK13343.1"/>
    <property type="match status" value="1"/>
</dbReference>
<dbReference type="PANTHER" id="PTHR48082">
    <property type="entry name" value="ATP SYNTHASE SUBUNIT ALPHA, MITOCHONDRIAL"/>
    <property type="match status" value="1"/>
</dbReference>
<dbReference type="PANTHER" id="PTHR48082:SF2">
    <property type="entry name" value="ATP SYNTHASE SUBUNIT ALPHA, MITOCHONDRIAL"/>
    <property type="match status" value="1"/>
</dbReference>
<dbReference type="Pfam" id="PF00006">
    <property type="entry name" value="ATP-synt_ab"/>
    <property type="match status" value="1"/>
</dbReference>
<dbReference type="Pfam" id="PF00306">
    <property type="entry name" value="ATP-synt_ab_C"/>
    <property type="match status" value="1"/>
</dbReference>
<dbReference type="Pfam" id="PF02874">
    <property type="entry name" value="ATP-synt_ab_N"/>
    <property type="match status" value="1"/>
</dbReference>
<dbReference type="PIRSF" id="PIRSF039088">
    <property type="entry name" value="F_ATPase_subunit_alpha"/>
    <property type="match status" value="1"/>
</dbReference>
<dbReference type="SUPFAM" id="SSF47917">
    <property type="entry name" value="C-terminal domain of alpha and beta subunits of F1 ATP synthase"/>
    <property type="match status" value="1"/>
</dbReference>
<dbReference type="SUPFAM" id="SSF50615">
    <property type="entry name" value="N-terminal domain of alpha and beta subunits of F1 ATP synthase"/>
    <property type="match status" value="1"/>
</dbReference>
<dbReference type="SUPFAM" id="SSF52540">
    <property type="entry name" value="P-loop containing nucleoside triphosphate hydrolases"/>
    <property type="match status" value="1"/>
</dbReference>
<accession>Q8P1K6</accession>
<organism>
    <name type="scientific">Streptococcus pyogenes serotype M18 (strain MGAS8232)</name>
    <dbReference type="NCBI Taxonomy" id="186103"/>
    <lineage>
        <taxon>Bacteria</taxon>
        <taxon>Bacillati</taxon>
        <taxon>Bacillota</taxon>
        <taxon>Bacilli</taxon>
        <taxon>Lactobacillales</taxon>
        <taxon>Streptococcaceae</taxon>
        <taxon>Streptococcus</taxon>
    </lineage>
</organism>
<comment type="function">
    <text evidence="1">Produces ATP from ADP in the presence of a proton gradient across the membrane. The alpha chain is a regulatory subunit.</text>
</comment>
<comment type="catalytic activity">
    <reaction evidence="1">
        <text>ATP + H2O + 4 H(+)(in) = ADP + phosphate + 5 H(+)(out)</text>
        <dbReference type="Rhea" id="RHEA:57720"/>
        <dbReference type="ChEBI" id="CHEBI:15377"/>
        <dbReference type="ChEBI" id="CHEBI:15378"/>
        <dbReference type="ChEBI" id="CHEBI:30616"/>
        <dbReference type="ChEBI" id="CHEBI:43474"/>
        <dbReference type="ChEBI" id="CHEBI:456216"/>
        <dbReference type="EC" id="7.1.2.2"/>
    </reaction>
</comment>
<comment type="subunit">
    <text evidence="1">F-type ATPases have 2 components, CF(1) - the catalytic core - and CF(0) - the membrane proton channel. CF(1) has five subunits: alpha(3), beta(3), gamma(1), delta(1), epsilon(1). CF(0) has three main subunits: a(1), b(2) and c(9-12). The alpha and beta chains form an alternating ring which encloses part of the gamma chain. CF(1) is attached to CF(0) by a central stalk formed by the gamma and epsilon chains, while a peripheral stalk is formed by the delta and b chains.</text>
</comment>
<comment type="subcellular location">
    <subcellularLocation>
        <location evidence="1">Cell membrane</location>
        <topology evidence="1">Peripheral membrane protein</topology>
    </subcellularLocation>
</comment>
<comment type="similarity">
    <text evidence="1">Belongs to the ATPase alpha/beta chains family.</text>
</comment>
<gene>
    <name evidence="1" type="primary">atpA</name>
    <name type="ordered locus">spyM18_0816</name>
</gene>